<evidence type="ECO:0000255" key="1">
    <source>
        <dbReference type="HAMAP-Rule" id="MF_00113"/>
    </source>
</evidence>
<reference key="1">
    <citation type="journal article" date="2009" name="J. Bacteriol.">
        <title>The genome of Thermosipho africanus TCF52B: lateral genetic connections to the Firmicutes and Archaea.</title>
        <authorList>
            <person name="Nesboe C.L."/>
            <person name="Bapteste E."/>
            <person name="Curtis B."/>
            <person name="Dahle H."/>
            <person name="Lopez P."/>
            <person name="Macleod D."/>
            <person name="Dlutek M."/>
            <person name="Bowman S."/>
            <person name="Zhaxybayeva O."/>
            <person name="Birkeland N.-K."/>
            <person name="Doolittle W.F."/>
        </authorList>
    </citation>
    <scope>NUCLEOTIDE SEQUENCE [LARGE SCALE GENOMIC DNA]</scope>
    <source>
        <strain>TCF52B</strain>
    </source>
</reference>
<proteinExistence type="inferred from homology"/>
<dbReference type="EC" id="2.4.99.17" evidence="1"/>
<dbReference type="EMBL" id="CP001185">
    <property type="protein sequence ID" value="ACJ74778.1"/>
    <property type="molecule type" value="Genomic_DNA"/>
</dbReference>
<dbReference type="RefSeq" id="WP_012579465.1">
    <property type="nucleotide sequence ID" value="NC_011653.1"/>
</dbReference>
<dbReference type="SMR" id="B7IFB4"/>
<dbReference type="STRING" id="484019.THA_278"/>
<dbReference type="KEGG" id="taf:THA_278"/>
<dbReference type="eggNOG" id="COG0809">
    <property type="taxonomic scope" value="Bacteria"/>
</dbReference>
<dbReference type="HOGENOM" id="CLU_039110_1_0_0"/>
<dbReference type="OrthoDB" id="9805933at2"/>
<dbReference type="UniPathway" id="UPA00392"/>
<dbReference type="Proteomes" id="UP000002453">
    <property type="component" value="Chromosome"/>
</dbReference>
<dbReference type="GO" id="GO:0005737">
    <property type="term" value="C:cytoplasm"/>
    <property type="evidence" value="ECO:0007669"/>
    <property type="project" value="UniProtKB-SubCell"/>
</dbReference>
<dbReference type="GO" id="GO:0051075">
    <property type="term" value="F:S-adenosylmethionine:tRNA ribosyltransferase-isomerase activity"/>
    <property type="evidence" value="ECO:0007669"/>
    <property type="project" value="UniProtKB-EC"/>
</dbReference>
<dbReference type="GO" id="GO:0008616">
    <property type="term" value="P:queuosine biosynthetic process"/>
    <property type="evidence" value="ECO:0007669"/>
    <property type="project" value="UniProtKB-UniRule"/>
</dbReference>
<dbReference type="GO" id="GO:0002099">
    <property type="term" value="P:tRNA wobble guanine modification"/>
    <property type="evidence" value="ECO:0007669"/>
    <property type="project" value="TreeGrafter"/>
</dbReference>
<dbReference type="FunFam" id="2.40.10.240:FF:000002">
    <property type="entry name" value="S-adenosylmethionine:tRNA ribosyltransferase-isomerase"/>
    <property type="match status" value="1"/>
</dbReference>
<dbReference type="FunFam" id="3.40.1780.10:FF:000001">
    <property type="entry name" value="S-adenosylmethionine:tRNA ribosyltransferase-isomerase"/>
    <property type="match status" value="1"/>
</dbReference>
<dbReference type="Gene3D" id="2.40.10.240">
    <property type="entry name" value="QueA-like"/>
    <property type="match status" value="1"/>
</dbReference>
<dbReference type="Gene3D" id="3.40.1780.10">
    <property type="entry name" value="QueA-like"/>
    <property type="match status" value="1"/>
</dbReference>
<dbReference type="HAMAP" id="MF_00113">
    <property type="entry name" value="QueA"/>
    <property type="match status" value="1"/>
</dbReference>
<dbReference type="InterPro" id="IPR003699">
    <property type="entry name" value="QueA"/>
</dbReference>
<dbReference type="InterPro" id="IPR042118">
    <property type="entry name" value="QueA_dom1"/>
</dbReference>
<dbReference type="InterPro" id="IPR042119">
    <property type="entry name" value="QueA_dom2"/>
</dbReference>
<dbReference type="InterPro" id="IPR036100">
    <property type="entry name" value="QueA_sf"/>
</dbReference>
<dbReference type="NCBIfam" id="NF001140">
    <property type="entry name" value="PRK00147.1"/>
    <property type="match status" value="1"/>
</dbReference>
<dbReference type="NCBIfam" id="TIGR00113">
    <property type="entry name" value="queA"/>
    <property type="match status" value="1"/>
</dbReference>
<dbReference type="PANTHER" id="PTHR30307">
    <property type="entry name" value="S-ADENOSYLMETHIONINE:TRNA RIBOSYLTRANSFERASE-ISOMERASE"/>
    <property type="match status" value="1"/>
</dbReference>
<dbReference type="PANTHER" id="PTHR30307:SF0">
    <property type="entry name" value="S-ADENOSYLMETHIONINE:TRNA RIBOSYLTRANSFERASE-ISOMERASE"/>
    <property type="match status" value="1"/>
</dbReference>
<dbReference type="Pfam" id="PF02547">
    <property type="entry name" value="Queuosine_synth"/>
    <property type="match status" value="1"/>
</dbReference>
<dbReference type="SUPFAM" id="SSF111337">
    <property type="entry name" value="QueA-like"/>
    <property type="match status" value="1"/>
</dbReference>
<feature type="chain" id="PRO_1000117538" description="S-adenosylmethionine:tRNA ribosyltransferase-isomerase">
    <location>
        <begin position="1"/>
        <end position="335"/>
    </location>
</feature>
<comment type="function">
    <text evidence="1">Transfers and isomerizes the ribose moiety from AdoMet to the 7-aminomethyl group of 7-deazaguanine (preQ1-tRNA) to give epoxyqueuosine (oQ-tRNA).</text>
</comment>
<comment type="catalytic activity">
    <reaction evidence="1">
        <text>7-aminomethyl-7-carbaguanosine(34) in tRNA + S-adenosyl-L-methionine = epoxyqueuosine(34) in tRNA + adenine + L-methionine + 2 H(+)</text>
        <dbReference type="Rhea" id="RHEA:32155"/>
        <dbReference type="Rhea" id="RHEA-COMP:10342"/>
        <dbReference type="Rhea" id="RHEA-COMP:18582"/>
        <dbReference type="ChEBI" id="CHEBI:15378"/>
        <dbReference type="ChEBI" id="CHEBI:16708"/>
        <dbReference type="ChEBI" id="CHEBI:57844"/>
        <dbReference type="ChEBI" id="CHEBI:59789"/>
        <dbReference type="ChEBI" id="CHEBI:82833"/>
        <dbReference type="ChEBI" id="CHEBI:194443"/>
        <dbReference type="EC" id="2.4.99.17"/>
    </reaction>
</comment>
<comment type="pathway">
    <text evidence="1">tRNA modification; tRNA-queuosine biosynthesis.</text>
</comment>
<comment type="subunit">
    <text evidence="1">Monomer.</text>
</comment>
<comment type="subcellular location">
    <subcellularLocation>
        <location evidence="1">Cytoplasm</location>
    </subcellularLocation>
</comment>
<comment type="similarity">
    <text evidence="1">Belongs to the QueA family.</text>
</comment>
<sequence length="335" mass="38326">MKLSDFDYYLPEELIAQTPAEPRDSSRLMVLNRKEKTIEHRIFRDIVEYLKPGDLLVRNITKVIPARLYGVKETGARVEILLLEKISEGVWEALVKPGSKVKKGTKIILSEGVEVICKDYSQQGARILEFNCSDDKLFELGNAPLPPYIKNQKVPFERYQTVYSKETGSVAAPTAGLHFTEELLERLRNKGLEFADLILHVGLGTFRPVKVEDIREHKMHSERYYVPAETVKKIRETRKNKGRIIAVGTTSVRTLETIARLPNQESYHGKTDIFIYPPFEFKLTDAIITNFHLPKSTLLMLVAAFAGKDFILEAYNTAVKMKYRFFSLGDACFIY</sequence>
<name>QUEA_THEAB</name>
<protein>
    <recommendedName>
        <fullName evidence="1">S-adenosylmethionine:tRNA ribosyltransferase-isomerase</fullName>
        <ecNumber evidence="1">2.4.99.17</ecNumber>
    </recommendedName>
    <alternativeName>
        <fullName evidence="1">Queuosine biosynthesis protein QueA</fullName>
    </alternativeName>
</protein>
<accession>B7IFB4</accession>
<keyword id="KW-0963">Cytoplasm</keyword>
<keyword id="KW-0671">Queuosine biosynthesis</keyword>
<keyword id="KW-1185">Reference proteome</keyword>
<keyword id="KW-0949">S-adenosyl-L-methionine</keyword>
<keyword id="KW-0808">Transferase</keyword>
<organism>
    <name type="scientific">Thermosipho africanus (strain TCF52B)</name>
    <dbReference type="NCBI Taxonomy" id="484019"/>
    <lineage>
        <taxon>Bacteria</taxon>
        <taxon>Thermotogati</taxon>
        <taxon>Thermotogota</taxon>
        <taxon>Thermotogae</taxon>
        <taxon>Thermotogales</taxon>
        <taxon>Fervidobacteriaceae</taxon>
        <taxon>Thermosipho</taxon>
    </lineage>
</organism>
<gene>
    <name evidence="1" type="primary">queA</name>
    <name type="ordered locus">THA_278</name>
</gene>